<gene>
    <name type="primary">rpb7</name>
    <name type="ORF">SPACUNK4.06c</name>
    <name type="ORF">SPAPYUK71.02</name>
</gene>
<sequence>MPFFLKELSLTISLHPSYFGPRMQDYLKAKLLADVEGTCSGQYGYIICVLDSNTIDIDKGRVVPGQGFAEFEVKYRAVLWRPFRGEVVDAIVTTVNKMGFFANIGPLNVFVSSHLVPPDMKFDPTANPPNYSGEDQVIEKGSNVRLKIVGTRTDATEIFAIATMKEDYLGVL</sequence>
<reference key="1">
    <citation type="journal article" date="1997" name="Gene">
        <title>Gene organization and protein sequence of the small subunits of Schizosaccharomyces pombe RNA polymerase II.</title>
        <authorList>
            <person name="Sakurai H."/>
            <person name="Ishihama A."/>
        </authorList>
    </citation>
    <scope>NUCLEOTIDE SEQUENCE [GENOMIC DNA / MRNA]</scope>
    <source>
        <strain>972 / ATCC 24843</strain>
        <strain>JY741</strain>
    </source>
</reference>
<reference key="2">
    <citation type="journal article" date="1997" name="Bioorg. Khim.">
        <title>Molecular cloning of rpb5+, rpb7+ and rpb11+ genes of the fission yeast Schizosaccharomyces pombe: completing primary structure of all indispensable subunits of its RNA polymerase II.</title>
        <authorList>
            <person name="Shpakovski G.V."/>
            <person name="Lebedenko E.N."/>
        </authorList>
    </citation>
    <scope>NUCLEOTIDE SEQUENCE [MRNA]</scope>
    <source>
        <strain>972 / ATCC 24843</strain>
    </source>
</reference>
<reference key="3">
    <citation type="journal article" date="2002" name="Nature">
        <title>The genome sequence of Schizosaccharomyces pombe.</title>
        <authorList>
            <person name="Wood V."/>
            <person name="Gwilliam R."/>
            <person name="Rajandream M.A."/>
            <person name="Lyne M.H."/>
            <person name="Lyne R."/>
            <person name="Stewart A."/>
            <person name="Sgouros J.G."/>
            <person name="Peat N."/>
            <person name="Hayles J."/>
            <person name="Baker S.G."/>
            <person name="Basham D."/>
            <person name="Bowman S."/>
            <person name="Brooks K."/>
            <person name="Brown D."/>
            <person name="Brown S."/>
            <person name="Chillingworth T."/>
            <person name="Churcher C.M."/>
            <person name="Collins M."/>
            <person name="Connor R."/>
            <person name="Cronin A."/>
            <person name="Davis P."/>
            <person name="Feltwell T."/>
            <person name="Fraser A."/>
            <person name="Gentles S."/>
            <person name="Goble A."/>
            <person name="Hamlin N."/>
            <person name="Harris D.E."/>
            <person name="Hidalgo J."/>
            <person name="Hodgson G."/>
            <person name="Holroyd S."/>
            <person name="Hornsby T."/>
            <person name="Howarth S."/>
            <person name="Huckle E.J."/>
            <person name="Hunt S."/>
            <person name="Jagels K."/>
            <person name="James K.D."/>
            <person name="Jones L."/>
            <person name="Jones M."/>
            <person name="Leather S."/>
            <person name="McDonald S."/>
            <person name="McLean J."/>
            <person name="Mooney P."/>
            <person name="Moule S."/>
            <person name="Mungall K.L."/>
            <person name="Murphy L.D."/>
            <person name="Niblett D."/>
            <person name="Odell C."/>
            <person name="Oliver K."/>
            <person name="O'Neil S."/>
            <person name="Pearson D."/>
            <person name="Quail M.A."/>
            <person name="Rabbinowitsch E."/>
            <person name="Rutherford K.M."/>
            <person name="Rutter S."/>
            <person name="Saunders D."/>
            <person name="Seeger K."/>
            <person name="Sharp S."/>
            <person name="Skelton J."/>
            <person name="Simmonds M.N."/>
            <person name="Squares R."/>
            <person name="Squares S."/>
            <person name="Stevens K."/>
            <person name="Taylor K."/>
            <person name="Taylor R.G."/>
            <person name="Tivey A."/>
            <person name="Walsh S.V."/>
            <person name="Warren T."/>
            <person name="Whitehead S."/>
            <person name="Woodward J.R."/>
            <person name="Volckaert G."/>
            <person name="Aert R."/>
            <person name="Robben J."/>
            <person name="Grymonprez B."/>
            <person name="Weltjens I."/>
            <person name="Vanstreels E."/>
            <person name="Rieger M."/>
            <person name="Schaefer M."/>
            <person name="Mueller-Auer S."/>
            <person name="Gabel C."/>
            <person name="Fuchs M."/>
            <person name="Duesterhoeft A."/>
            <person name="Fritzc C."/>
            <person name="Holzer E."/>
            <person name="Moestl D."/>
            <person name="Hilbert H."/>
            <person name="Borzym K."/>
            <person name="Langer I."/>
            <person name="Beck A."/>
            <person name="Lehrach H."/>
            <person name="Reinhardt R."/>
            <person name="Pohl T.M."/>
            <person name="Eger P."/>
            <person name="Zimmermann W."/>
            <person name="Wedler H."/>
            <person name="Wambutt R."/>
            <person name="Purnelle B."/>
            <person name="Goffeau A."/>
            <person name="Cadieu E."/>
            <person name="Dreano S."/>
            <person name="Gloux S."/>
            <person name="Lelaure V."/>
            <person name="Mottier S."/>
            <person name="Galibert F."/>
            <person name="Aves S.J."/>
            <person name="Xiang Z."/>
            <person name="Hunt C."/>
            <person name="Moore K."/>
            <person name="Hurst S.M."/>
            <person name="Lucas M."/>
            <person name="Rochet M."/>
            <person name="Gaillardin C."/>
            <person name="Tallada V.A."/>
            <person name="Garzon A."/>
            <person name="Thode G."/>
            <person name="Daga R.R."/>
            <person name="Cruzado L."/>
            <person name="Jimenez J."/>
            <person name="Sanchez M."/>
            <person name="del Rey F."/>
            <person name="Benito J."/>
            <person name="Dominguez A."/>
            <person name="Revuelta J.L."/>
            <person name="Moreno S."/>
            <person name="Armstrong J."/>
            <person name="Forsburg S.L."/>
            <person name="Cerutti L."/>
            <person name="Lowe T."/>
            <person name="McCombie W.R."/>
            <person name="Paulsen I."/>
            <person name="Potashkin J."/>
            <person name="Shpakovski G.V."/>
            <person name="Ussery D."/>
            <person name="Barrell B.G."/>
            <person name="Nurse P."/>
        </authorList>
    </citation>
    <scope>NUCLEOTIDE SEQUENCE [LARGE SCALE GENOMIC DNA]</scope>
    <source>
        <strain>972 / ATCC 24843</strain>
    </source>
</reference>
<reference key="4">
    <citation type="journal article" date="2003" name="Nucleic Acids Res.">
        <title>Rpb7 subunit of RNA polymerase II interacts with an RNA-binding protein involved in processing of transcripts.</title>
        <authorList>
            <person name="Mitsuzawa H."/>
            <person name="Kanda E."/>
            <person name="Ishihama A."/>
        </authorList>
    </citation>
    <scope>INTERACTION WITH SEB1</scope>
    <scope>MUTAGENESIS OF GLU-166 AND ASP-167</scope>
</reference>
<keyword id="KW-0002">3D-structure</keyword>
<keyword id="KW-0240">DNA-directed RNA polymerase</keyword>
<keyword id="KW-0539">Nucleus</keyword>
<keyword id="KW-1185">Reference proteome</keyword>
<keyword id="KW-0804">Transcription</keyword>
<organism>
    <name type="scientific">Schizosaccharomyces pombe (strain 972 / ATCC 24843)</name>
    <name type="common">Fission yeast</name>
    <dbReference type="NCBI Taxonomy" id="284812"/>
    <lineage>
        <taxon>Eukaryota</taxon>
        <taxon>Fungi</taxon>
        <taxon>Dikarya</taxon>
        <taxon>Ascomycota</taxon>
        <taxon>Taphrinomycotina</taxon>
        <taxon>Schizosaccharomycetes</taxon>
        <taxon>Schizosaccharomycetales</taxon>
        <taxon>Schizosaccharomycetaceae</taxon>
        <taxon>Schizosaccharomyces</taxon>
    </lineage>
</organism>
<comment type="function">
    <text evidence="1">DNA-dependent RNA polymerase catalyzes the transcription of DNA into RNA using the four ribonucleoside triphosphates as substrates. Component of RNA polymerase II which synthesizes mRNA precursors and many functional non-coding RNAs. Pol II is the central component of the basal RNA polymerase II transcription machinery. It is composed of mobile elements that move relative to each other. RPB7 is part of a subcomplex with RPB4 that binds to a pocket formed by RPB1, RPB2 and RPB6 at the base of the clamp element. The RPB4-RPB7 subcomplex seems to lock the clamp via RPB7 in the closed conformation thus preventing double-stranded DNA to enter the active site cleft. The RPB4-RPB7 subcomplex binds single-stranded DNA and RNA (By similarity).</text>
</comment>
<comment type="subunit">
    <text evidence="1 2">Component of the RNA polymerase II (Pol II) complex consisting of 12 subunits. RPB4 and RPB7 form a subcomplex that protrudes from the 10-subunit Pol II core complex (By similarity). Interacts with seb1.</text>
</comment>
<comment type="interaction">
    <interactant intactId="EBI-608029">
        <id>O14459</id>
    </interactant>
    <interactant intactId="EBI-608019">
        <id>Q9UTE3</id>
        <label>seb1</label>
    </interactant>
    <organismsDiffer>false</organismsDiffer>
    <experiments>3</experiments>
</comment>
<comment type="subcellular location">
    <subcellularLocation>
        <location evidence="1">Nucleus</location>
    </subcellularLocation>
</comment>
<comment type="similarity">
    <text evidence="3">Belongs to the eukaryotic RPB7/RPC8 RNA polymerase subunit family.</text>
</comment>
<proteinExistence type="evidence at protein level"/>
<feature type="chain" id="PRO_0000073992" description="DNA-directed RNA polymerase II subunit rpb7">
    <location>
        <begin position="1"/>
        <end position="172"/>
    </location>
</feature>
<feature type="mutagenesis site" description="Reduced interaction with seb1." evidence="2">
    <original>E</original>
    <variation>A</variation>
    <location>
        <position position="166"/>
    </location>
</feature>
<feature type="mutagenesis site" description="Reduced interaction with seb1." evidence="2">
    <original>D</original>
    <variation>A</variation>
    <location>
        <position position="167"/>
    </location>
</feature>
<feature type="strand" evidence="4">
    <location>
        <begin position="12"/>
        <end position="14"/>
    </location>
</feature>
<feature type="helix" evidence="4">
    <location>
        <begin position="16"/>
        <end position="18"/>
    </location>
</feature>
<feature type="helix" evidence="4">
    <location>
        <begin position="23"/>
        <end position="33"/>
    </location>
</feature>
<feature type="turn" evidence="4">
    <location>
        <begin position="64"/>
        <end position="66"/>
    </location>
</feature>
<feature type="strand" evidence="4">
    <location>
        <begin position="69"/>
        <end position="71"/>
    </location>
</feature>
<protein>
    <recommendedName>
        <fullName>DNA-directed RNA polymerase II subunit rpb7</fullName>
        <shortName>RNA polymerase II subunit B7</shortName>
    </recommendedName>
</protein>
<dbReference type="EMBL" id="D89594">
    <property type="protein sequence ID" value="BAA22804.1"/>
    <property type="molecule type" value="Genomic_DNA"/>
</dbReference>
<dbReference type="EMBL" id="D86554">
    <property type="protein sequence ID" value="BAA22802.1"/>
    <property type="molecule type" value="mRNA"/>
</dbReference>
<dbReference type="EMBL" id="AF027821">
    <property type="protein sequence ID" value="AAB92516.1"/>
    <property type="molecule type" value="mRNA"/>
</dbReference>
<dbReference type="EMBL" id="AF055916">
    <property type="protein sequence ID" value="AAC99317.1"/>
    <property type="molecule type" value="Genomic_DNA"/>
</dbReference>
<dbReference type="EMBL" id="CU329670">
    <property type="protein sequence ID" value="CAA20136.2"/>
    <property type="molecule type" value="Genomic_DNA"/>
</dbReference>
<dbReference type="PIR" id="T39254">
    <property type="entry name" value="T39254"/>
</dbReference>
<dbReference type="RefSeq" id="XP_001713072.1">
    <property type="nucleotide sequence ID" value="XM_001713020.2"/>
</dbReference>
<dbReference type="PDB" id="3H0G">
    <property type="method" value="X-ray"/>
    <property type="resolution" value="3.65 A"/>
    <property type="chains" value="G/S=1-172"/>
</dbReference>
<dbReference type="PDB" id="5U0S">
    <property type="method" value="EM"/>
    <property type="resolution" value="7.80 A"/>
    <property type="chains" value="g=1-172"/>
</dbReference>
<dbReference type="PDB" id="8QSZ">
    <property type="method" value="EM"/>
    <property type="resolution" value="2.67 A"/>
    <property type="chains" value="G=1-172"/>
</dbReference>
<dbReference type="PDBsum" id="3H0G"/>
<dbReference type="PDBsum" id="5U0S"/>
<dbReference type="PDBsum" id="8QSZ"/>
<dbReference type="EMDB" id="EMD-18643"/>
<dbReference type="EMDB" id="EMD-8480"/>
<dbReference type="SMR" id="O14459"/>
<dbReference type="BioGRID" id="278573">
    <property type="interactions" value="123"/>
</dbReference>
<dbReference type="ComplexPortal" id="CPX-2661">
    <property type="entry name" value="DNA-directed RNA polymerase II complex"/>
</dbReference>
<dbReference type="FunCoup" id="O14459">
    <property type="interactions" value="590"/>
</dbReference>
<dbReference type="IntAct" id="O14459">
    <property type="interactions" value="3"/>
</dbReference>
<dbReference type="MINT" id="O14459"/>
<dbReference type="STRING" id="284812.O14459"/>
<dbReference type="iPTMnet" id="O14459"/>
<dbReference type="PaxDb" id="4896-SPACUNK4.06c.1"/>
<dbReference type="EnsemblFungi" id="SPACUNK4.06c.1">
    <property type="protein sequence ID" value="SPACUNK4.06c.1:pep"/>
    <property type="gene ID" value="SPACUNK4.06c"/>
</dbReference>
<dbReference type="PomBase" id="SPACUNK4.06c">
    <property type="gene designation" value="rpb7"/>
</dbReference>
<dbReference type="VEuPathDB" id="FungiDB:SPACUNK4.06c"/>
<dbReference type="eggNOG" id="KOG3298">
    <property type="taxonomic scope" value="Eukaryota"/>
</dbReference>
<dbReference type="HOGENOM" id="CLU_085878_2_0_1"/>
<dbReference type="InParanoid" id="O14459"/>
<dbReference type="OMA" id="TMRQPGL"/>
<dbReference type="PhylomeDB" id="O14459"/>
<dbReference type="Reactome" id="R-SPO-113418">
    <property type="pathway name" value="Formation of the Early Elongation Complex"/>
</dbReference>
<dbReference type="Reactome" id="R-SPO-5578749">
    <property type="pathway name" value="Transcriptional regulation by small RNAs"/>
</dbReference>
<dbReference type="Reactome" id="R-SPO-674695">
    <property type="pathway name" value="RNA Polymerase II Pre-transcription Events"/>
</dbReference>
<dbReference type="Reactome" id="R-SPO-6781823">
    <property type="pathway name" value="Formation of TC-NER Pre-Incision Complex"/>
</dbReference>
<dbReference type="Reactome" id="R-SPO-6782135">
    <property type="pathway name" value="Dual incision in TC-NER"/>
</dbReference>
<dbReference type="Reactome" id="R-SPO-6782210">
    <property type="pathway name" value="Gap-filling DNA repair synthesis and ligation in TC-NER"/>
</dbReference>
<dbReference type="Reactome" id="R-SPO-6796648">
    <property type="pathway name" value="TP53 Regulates Transcription of DNA Repair Genes"/>
</dbReference>
<dbReference type="Reactome" id="R-SPO-6807505">
    <property type="pathway name" value="RNA polymerase II transcribes snRNA genes"/>
</dbReference>
<dbReference type="Reactome" id="R-SPO-72086">
    <property type="pathway name" value="mRNA Capping"/>
</dbReference>
<dbReference type="Reactome" id="R-SPO-72163">
    <property type="pathway name" value="mRNA Splicing - Major Pathway"/>
</dbReference>
<dbReference type="Reactome" id="R-SPO-72203">
    <property type="pathway name" value="Processing of Capped Intron-Containing Pre-mRNA"/>
</dbReference>
<dbReference type="Reactome" id="R-SPO-73776">
    <property type="pathway name" value="RNA Polymerase II Promoter Escape"/>
</dbReference>
<dbReference type="Reactome" id="R-SPO-73779">
    <property type="pathway name" value="RNA Polymerase II Transcription Pre-Initiation And Promoter Opening"/>
</dbReference>
<dbReference type="Reactome" id="R-SPO-75953">
    <property type="pathway name" value="RNA Polymerase II Transcription Initiation"/>
</dbReference>
<dbReference type="Reactome" id="R-SPO-76042">
    <property type="pathway name" value="RNA Polymerase II Transcription Initiation And Promoter Clearance"/>
</dbReference>
<dbReference type="Reactome" id="R-SPO-77075">
    <property type="pathway name" value="RNA Pol II CTD phosphorylation and interaction with CE"/>
</dbReference>
<dbReference type="Reactome" id="R-SPO-9018519">
    <property type="pathway name" value="Estrogen-dependent gene expression"/>
</dbReference>
<dbReference type="EvolutionaryTrace" id="O14459"/>
<dbReference type="PRO" id="PR:O14459"/>
<dbReference type="Proteomes" id="UP000002485">
    <property type="component" value="Chromosome I"/>
</dbReference>
<dbReference type="GO" id="GO:0005829">
    <property type="term" value="C:cytosol"/>
    <property type="evidence" value="ECO:0007005"/>
    <property type="project" value="PomBase"/>
</dbReference>
<dbReference type="GO" id="GO:0005634">
    <property type="term" value="C:nucleus"/>
    <property type="evidence" value="ECO:0007005"/>
    <property type="project" value="PomBase"/>
</dbReference>
<dbReference type="GO" id="GO:0000932">
    <property type="term" value="C:P-body"/>
    <property type="evidence" value="ECO:0000318"/>
    <property type="project" value="GO_Central"/>
</dbReference>
<dbReference type="GO" id="GO:0005665">
    <property type="term" value="C:RNA polymerase II, core complex"/>
    <property type="evidence" value="ECO:0000314"/>
    <property type="project" value="PomBase"/>
</dbReference>
<dbReference type="GO" id="GO:0016591">
    <property type="term" value="C:RNA polymerase II, holoenzyme"/>
    <property type="evidence" value="ECO:0000269"/>
    <property type="project" value="PomBase"/>
</dbReference>
<dbReference type="GO" id="GO:0003697">
    <property type="term" value="F:single-stranded DNA binding"/>
    <property type="evidence" value="ECO:0000318"/>
    <property type="project" value="GO_Central"/>
</dbReference>
<dbReference type="GO" id="GO:0003727">
    <property type="term" value="F:single-stranded RNA binding"/>
    <property type="evidence" value="ECO:0000318"/>
    <property type="project" value="GO_Central"/>
</dbReference>
<dbReference type="GO" id="GO:0031369">
    <property type="term" value="F:translation initiation factor binding"/>
    <property type="evidence" value="ECO:0000318"/>
    <property type="project" value="GO_Central"/>
</dbReference>
<dbReference type="GO" id="GO:0000956">
    <property type="term" value="P:nuclear-transcribed mRNA catabolic process"/>
    <property type="evidence" value="ECO:0000318"/>
    <property type="project" value="GO_Central"/>
</dbReference>
<dbReference type="GO" id="GO:0060213">
    <property type="term" value="P:positive regulation of nuclear-transcribed mRNA poly(A) tail shortening"/>
    <property type="evidence" value="ECO:0000318"/>
    <property type="project" value="GO_Central"/>
</dbReference>
<dbReference type="GO" id="GO:0045948">
    <property type="term" value="P:positive regulation of translational initiation"/>
    <property type="evidence" value="ECO:0000318"/>
    <property type="project" value="GO_Central"/>
</dbReference>
<dbReference type="GO" id="GO:0010590">
    <property type="term" value="P:regulation of septum digestion after cytokinesis"/>
    <property type="evidence" value="ECO:0000315"/>
    <property type="project" value="PomBase"/>
</dbReference>
<dbReference type="GO" id="GO:0006367">
    <property type="term" value="P:transcription initiation at RNA polymerase II promoter"/>
    <property type="evidence" value="ECO:0000314"/>
    <property type="project" value="PomBase"/>
</dbReference>
<dbReference type="CDD" id="cd04329">
    <property type="entry name" value="RNAP_II_Rpb7_N"/>
    <property type="match status" value="1"/>
</dbReference>
<dbReference type="CDD" id="cd04462">
    <property type="entry name" value="S1_RNAPII_Rpb7"/>
    <property type="match status" value="1"/>
</dbReference>
<dbReference type="FunFam" id="2.40.50.140:FF:000043">
    <property type="entry name" value="DNA-directed RNA polymerase II subunit RPB7"/>
    <property type="match status" value="1"/>
</dbReference>
<dbReference type="FunFam" id="3.30.1490.120:FF:000001">
    <property type="entry name" value="DNA-directed RNA polymerase II subunit RPB7"/>
    <property type="match status" value="1"/>
</dbReference>
<dbReference type="Gene3D" id="2.40.50.140">
    <property type="entry name" value="Nucleic acid-binding proteins"/>
    <property type="match status" value="1"/>
</dbReference>
<dbReference type="Gene3D" id="3.30.1490.120">
    <property type="entry name" value="RNA polymerase Rpb7-like, N-terminal domain"/>
    <property type="match status" value="1"/>
</dbReference>
<dbReference type="InterPro" id="IPR012340">
    <property type="entry name" value="NA-bd_OB-fold"/>
</dbReference>
<dbReference type="InterPro" id="IPR036898">
    <property type="entry name" value="RNA_pol_Rpb7-like_N_sf"/>
</dbReference>
<dbReference type="InterPro" id="IPR045113">
    <property type="entry name" value="Rpb7-like"/>
</dbReference>
<dbReference type="InterPro" id="IPR005576">
    <property type="entry name" value="Rpb7-like_N"/>
</dbReference>
<dbReference type="InterPro" id="IPR003029">
    <property type="entry name" value="S1_domain"/>
</dbReference>
<dbReference type="PANTHER" id="PTHR12709:SF4">
    <property type="entry name" value="DNA-DIRECTED RNA POLYMERASE II SUBUNIT RPB7"/>
    <property type="match status" value="1"/>
</dbReference>
<dbReference type="PANTHER" id="PTHR12709">
    <property type="entry name" value="DNA-DIRECTED RNA POLYMERASE II, III"/>
    <property type="match status" value="1"/>
</dbReference>
<dbReference type="Pfam" id="PF00575">
    <property type="entry name" value="S1"/>
    <property type="match status" value="1"/>
</dbReference>
<dbReference type="Pfam" id="PF03876">
    <property type="entry name" value="SHS2_Rpb7-N"/>
    <property type="match status" value="1"/>
</dbReference>
<dbReference type="SUPFAM" id="SSF88798">
    <property type="entry name" value="N-terminal, heterodimerisation domain of RBP7 (RpoE)"/>
    <property type="match status" value="1"/>
</dbReference>
<dbReference type="SUPFAM" id="SSF50249">
    <property type="entry name" value="Nucleic acid-binding proteins"/>
    <property type="match status" value="1"/>
</dbReference>
<evidence type="ECO:0000250" key="1"/>
<evidence type="ECO:0000269" key="2">
    <source>
    </source>
</evidence>
<evidence type="ECO:0000305" key="3"/>
<evidence type="ECO:0007829" key="4">
    <source>
        <dbReference type="PDB" id="8QSZ"/>
    </source>
</evidence>
<accession>O14459</accession>
<name>RPB7_SCHPO</name>